<accession>A8Y9D1</accession>
<proteinExistence type="inferred from homology"/>
<protein>
    <recommendedName>
        <fullName evidence="2">Small ribosomal subunit protein uS7cz/uS7cy</fullName>
    </recommendedName>
    <alternativeName>
        <fullName>30S ribosomal protein S7, chloroplastic</fullName>
    </alternativeName>
</protein>
<reference key="1">
    <citation type="journal article" date="2008" name="PLoS ONE">
        <title>An optimized chloroplast DNA extraction protocol for grasses (Poaceae) proves suitable for whole plastid genome sequencing and SNP detection.</title>
        <authorList>
            <person name="Diekmann K."/>
            <person name="Hodkinson T.R."/>
            <person name="Fricke E."/>
            <person name="Barth S."/>
        </authorList>
    </citation>
    <scope>NUCLEOTIDE SEQUENCE [LARGE SCALE GENOMIC DNA]</scope>
    <source>
        <strain>cv. Cashel</strain>
    </source>
</reference>
<gene>
    <name type="primary">rps7-A</name>
    <name type="ordered locus">LopeCp089</name>
</gene>
<gene>
    <name type="primary">rps7-B</name>
    <name type="ordered locus">LopeCp124</name>
</gene>
<sequence>MSRRGTAEKRTAKSDPIFRNRLVNMVVNRIMKDGKKSLAYQILYRAVKKIQQKTETNPLLVLRQAIRRVTPNIGVKTRRNKKGSTRKVPIEIGSKQGRALAIRWLLEASQKRPGRNMAFKLSSELVDAAKGSGGAIRKKEATHRMAEANRALAHFR</sequence>
<organism>
    <name type="scientific">Lolium perenne</name>
    <name type="common">Perennial ryegrass</name>
    <dbReference type="NCBI Taxonomy" id="4522"/>
    <lineage>
        <taxon>Eukaryota</taxon>
        <taxon>Viridiplantae</taxon>
        <taxon>Streptophyta</taxon>
        <taxon>Embryophyta</taxon>
        <taxon>Tracheophyta</taxon>
        <taxon>Spermatophyta</taxon>
        <taxon>Magnoliopsida</taxon>
        <taxon>Liliopsida</taxon>
        <taxon>Poales</taxon>
        <taxon>Poaceae</taxon>
        <taxon>BOP clade</taxon>
        <taxon>Pooideae</taxon>
        <taxon>Poodae</taxon>
        <taxon>Poeae</taxon>
        <taxon>Poeae Chloroplast Group 2 (Poeae type)</taxon>
        <taxon>Loliodinae</taxon>
        <taxon>Loliinae</taxon>
        <taxon>Lolium</taxon>
    </lineage>
</organism>
<evidence type="ECO:0000250" key="1"/>
<evidence type="ECO:0000255" key="2">
    <source>
        <dbReference type="HAMAP-Rule" id="MF_00480"/>
    </source>
</evidence>
<evidence type="ECO:0000305" key="3"/>
<geneLocation type="chloroplast"/>
<comment type="function">
    <text evidence="1">One of the primary rRNA binding proteins, it binds directly to 16S rRNA where it nucleates assembly of the head domain of the 30S subunit.</text>
</comment>
<comment type="subunit">
    <text evidence="1">Part of the 30S ribosomal subunit.</text>
</comment>
<comment type="subcellular location">
    <subcellularLocation>
        <location>Plastid</location>
        <location>Chloroplast</location>
    </subcellularLocation>
</comment>
<comment type="similarity">
    <text evidence="3">Belongs to the universal ribosomal protein uS7 family.</text>
</comment>
<feature type="chain" id="PRO_0000344348" description="Small ribosomal subunit protein uS7cz/uS7cy">
    <location>
        <begin position="1"/>
        <end position="156"/>
    </location>
</feature>
<keyword id="KW-0150">Chloroplast</keyword>
<keyword id="KW-0934">Plastid</keyword>
<keyword id="KW-0687">Ribonucleoprotein</keyword>
<keyword id="KW-0689">Ribosomal protein</keyword>
<keyword id="KW-0694">RNA-binding</keyword>
<keyword id="KW-0699">rRNA-binding</keyword>
<dbReference type="EMBL" id="AM777385">
    <property type="protein sequence ID" value="CAO86020.1"/>
    <property type="molecule type" value="Genomic_DNA"/>
</dbReference>
<dbReference type="EMBL" id="AM777385">
    <property type="protein sequence ID" value="CAO86034.1"/>
    <property type="molecule type" value="Genomic_DNA"/>
</dbReference>
<dbReference type="SMR" id="A8Y9D1"/>
<dbReference type="KEGG" id="lper:5696556"/>
<dbReference type="KEGG" id="lper:5696605"/>
<dbReference type="GO" id="GO:0009507">
    <property type="term" value="C:chloroplast"/>
    <property type="evidence" value="ECO:0007669"/>
    <property type="project" value="UniProtKB-SubCell"/>
</dbReference>
<dbReference type="GO" id="GO:0015935">
    <property type="term" value="C:small ribosomal subunit"/>
    <property type="evidence" value="ECO:0007669"/>
    <property type="project" value="InterPro"/>
</dbReference>
<dbReference type="GO" id="GO:0019843">
    <property type="term" value="F:rRNA binding"/>
    <property type="evidence" value="ECO:0007669"/>
    <property type="project" value="UniProtKB-UniRule"/>
</dbReference>
<dbReference type="GO" id="GO:0003735">
    <property type="term" value="F:structural constituent of ribosome"/>
    <property type="evidence" value="ECO:0007669"/>
    <property type="project" value="InterPro"/>
</dbReference>
<dbReference type="GO" id="GO:0006412">
    <property type="term" value="P:translation"/>
    <property type="evidence" value="ECO:0007669"/>
    <property type="project" value="UniProtKB-UniRule"/>
</dbReference>
<dbReference type="CDD" id="cd14871">
    <property type="entry name" value="uS7_Chloroplast"/>
    <property type="match status" value="1"/>
</dbReference>
<dbReference type="FunFam" id="1.10.455.10:FF:000001">
    <property type="entry name" value="30S ribosomal protein S7"/>
    <property type="match status" value="1"/>
</dbReference>
<dbReference type="Gene3D" id="1.10.455.10">
    <property type="entry name" value="Ribosomal protein S7 domain"/>
    <property type="match status" value="1"/>
</dbReference>
<dbReference type="HAMAP" id="MF_00480_B">
    <property type="entry name" value="Ribosomal_uS7_B"/>
    <property type="match status" value="1"/>
</dbReference>
<dbReference type="InterPro" id="IPR000235">
    <property type="entry name" value="Ribosomal_uS7"/>
</dbReference>
<dbReference type="InterPro" id="IPR005717">
    <property type="entry name" value="Ribosomal_uS7_bac/org-type"/>
</dbReference>
<dbReference type="InterPro" id="IPR020606">
    <property type="entry name" value="Ribosomal_uS7_CS"/>
</dbReference>
<dbReference type="InterPro" id="IPR023798">
    <property type="entry name" value="Ribosomal_uS7_dom"/>
</dbReference>
<dbReference type="InterPro" id="IPR036823">
    <property type="entry name" value="Ribosomal_uS7_dom_sf"/>
</dbReference>
<dbReference type="NCBIfam" id="TIGR01029">
    <property type="entry name" value="rpsG_bact"/>
    <property type="match status" value="1"/>
</dbReference>
<dbReference type="PANTHER" id="PTHR11205">
    <property type="entry name" value="RIBOSOMAL PROTEIN S7"/>
    <property type="match status" value="1"/>
</dbReference>
<dbReference type="Pfam" id="PF00177">
    <property type="entry name" value="Ribosomal_S7"/>
    <property type="match status" value="1"/>
</dbReference>
<dbReference type="PIRSF" id="PIRSF002122">
    <property type="entry name" value="RPS7p_RPS7a_RPS5e_RPS7o"/>
    <property type="match status" value="1"/>
</dbReference>
<dbReference type="SUPFAM" id="SSF47973">
    <property type="entry name" value="Ribosomal protein S7"/>
    <property type="match status" value="1"/>
</dbReference>
<dbReference type="PROSITE" id="PS00052">
    <property type="entry name" value="RIBOSOMAL_S7"/>
    <property type="match status" value="1"/>
</dbReference>
<name>RR7_LOLPR</name>